<evidence type="ECO:0000255" key="1">
    <source>
        <dbReference type="HAMAP-Rule" id="MF_00156"/>
    </source>
</evidence>
<comment type="function">
    <text evidence="1">Catalyzes the reversible reaction in which hydroxymethyl group from 5,10-methylenetetrahydrofolate is transferred onto alpha-ketoisovalerate to form ketopantoate.</text>
</comment>
<comment type="catalytic activity">
    <reaction evidence="1">
        <text>3-methyl-2-oxobutanoate + (6R)-5,10-methylene-5,6,7,8-tetrahydrofolate + H2O = 2-dehydropantoate + (6S)-5,6,7,8-tetrahydrofolate</text>
        <dbReference type="Rhea" id="RHEA:11824"/>
        <dbReference type="ChEBI" id="CHEBI:11561"/>
        <dbReference type="ChEBI" id="CHEBI:11851"/>
        <dbReference type="ChEBI" id="CHEBI:15377"/>
        <dbReference type="ChEBI" id="CHEBI:15636"/>
        <dbReference type="ChEBI" id="CHEBI:57453"/>
        <dbReference type="EC" id="2.1.2.11"/>
    </reaction>
</comment>
<comment type="cofactor">
    <cofactor evidence="1">
        <name>Mg(2+)</name>
        <dbReference type="ChEBI" id="CHEBI:18420"/>
    </cofactor>
    <text evidence="1">Binds 1 Mg(2+) ion per subunit.</text>
</comment>
<comment type="pathway">
    <text evidence="1">Cofactor biosynthesis; coenzyme A biosynthesis.</text>
</comment>
<comment type="subunit">
    <text evidence="1">Homodecamer; pentamer of dimers.</text>
</comment>
<comment type="subcellular location">
    <subcellularLocation>
        <location evidence="1">Cytoplasm</location>
    </subcellularLocation>
</comment>
<comment type="similarity">
    <text evidence="1">Belongs to the PanB family.</text>
</comment>
<organism>
    <name type="scientific">Sulfurisphaera tokodaii (strain DSM 16993 / JCM 10545 / NBRC 100140 / 7)</name>
    <name type="common">Sulfolobus tokodaii</name>
    <dbReference type="NCBI Taxonomy" id="273063"/>
    <lineage>
        <taxon>Archaea</taxon>
        <taxon>Thermoproteota</taxon>
        <taxon>Thermoprotei</taxon>
        <taxon>Sulfolobales</taxon>
        <taxon>Sulfolobaceae</taxon>
        <taxon>Sulfurisphaera</taxon>
    </lineage>
</organism>
<dbReference type="EC" id="2.1.2.11" evidence="1"/>
<dbReference type="EMBL" id="BA000023">
    <property type="protein sequence ID" value="BAK54322.1"/>
    <property type="molecule type" value="Genomic_DNA"/>
</dbReference>
<dbReference type="RefSeq" id="WP_010978510.1">
    <property type="nucleotide sequence ID" value="NC_003106.2"/>
</dbReference>
<dbReference type="SMR" id="Q974Y0"/>
<dbReference type="STRING" id="273063.STK_05330"/>
<dbReference type="GeneID" id="1458477"/>
<dbReference type="KEGG" id="sto:STK_05330"/>
<dbReference type="PATRIC" id="fig|273063.9.peg.610"/>
<dbReference type="eggNOG" id="arCOG00584">
    <property type="taxonomic scope" value="Archaea"/>
</dbReference>
<dbReference type="OrthoDB" id="8414at2157"/>
<dbReference type="UniPathway" id="UPA00241"/>
<dbReference type="Proteomes" id="UP000001015">
    <property type="component" value="Chromosome"/>
</dbReference>
<dbReference type="GO" id="GO:0005737">
    <property type="term" value="C:cytoplasm"/>
    <property type="evidence" value="ECO:0007669"/>
    <property type="project" value="UniProtKB-SubCell"/>
</dbReference>
<dbReference type="GO" id="GO:0003864">
    <property type="term" value="F:3-methyl-2-oxobutanoate hydroxymethyltransferase activity"/>
    <property type="evidence" value="ECO:0007669"/>
    <property type="project" value="UniProtKB-UniRule"/>
</dbReference>
<dbReference type="GO" id="GO:0000287">
    <property type="term" value="F:magnesium ion binding"/>
    <property type="evidence" value="ECO:0007669"/>
    <property type="project" value="TreeGrafter"/>
</dbReference>
<dbReference type="GO" id="GO:0015937">
    <property type="term" value="P:coenzyme A biosynthetic process"/>
    <property type="evidence" value="ECO:0007669"/>
    <property type="project" value="UniProtKB-UniRule"/>
</dbReference>
<dbReference type="GO" id="GO:0015940">
    <property type="term" value="P:pantothenate biosynthetic process"/>
    <property type="evidence" value="ECO:0007669"/>
    <property type="project" value="InterPro"/>
</dbReference>
<dbReference type="CDD" id="cd06557">
    <property type="entry name" value="KPHMT-like"/>
    <property type="match status" value="1"/>
</dbReference>
<dbReference type="FunFam" id="3.20.20.60:FF:000003">
    <property type="entry name" value="3-methyl-2-oxobutanoate hydroxymethyltransferase"/>
    <property type="match status" value="1"/>
</dbReference>
<dbReference type="Gene3D" id="3.20.20.60">
    <property type="entry name" value="Phosphoenolpyruvate-binding domains"/>
    <property type="match status" value="1"/>
</dbReference>
<dbReference type="HAMAP" id="MF_00156">
    <property type="entry name" value="PanB"/>
    <property type="match status" value="1"/>
</dbReference>
<dbReference type="InterPro" id="IPR003700">
    <property type="entry name" value="Pantoate_hydroxy_MeTrfase"/>
</dbReference>
<dbReference type="InterPro" id="IPR015813">
    <property type="entry name" value="Pyrv/PenolPyrv_kinase-like_dom"/>
</dbReference>
<dbReference type="InterPro" id="IPR040442">
    <property type="entry name" value="Pyrv_kinase-like_dom_sf"/>
</dbReference>
<dbReference type="NCBIfam" id="TIGR00222">
    <property type="entry name" value="panB"/>
    <property type="match status" value="1"/>
</dbReference>
<dbReference type="NCBIfam" id="NF001452">
    <property type="entry name" value="PRK00311.1"/>
    <property type="match status" value="1"/>
</dbReference>
<dbReference type="PANTHER" id="PTHR20881">
    <property type="entry name" value="3-METHYL-2-OXOBUTANOATE HYDROXYMETHYLTRANSFERASE"/>
    <property type="match status" value="1"/>
</dbReference>
<dbReference type="PANTHER" id="PTHR20881:SF0">
    <property type="entry name" value="3-METHYL-2-OXOBUTANOATE HYDROXYMETHYLTRANSFERASE"/>
    <property type="match status" value="1"/>
</dbReference>
<dbReference type="Pfam" id="PF02548">
    <property type="entry name" value="Pantoate_transf"/>
    <property type="match status" value="1"/>
</dbReference>
<dbReference type="PIRSF" id="PIRSF000388">
    <property type="entry name" value="Pantoate_hydroxy_MeTrfase"/>
    <property type="match status" value="1"/>
</dbReference>
<dbReference type="SUPFAM" id="SSF51621">
    <property type="entry name" value="Phosphoenolpyruvate/pyruvate domain"/>
    <property type="match status" value="1"/>
</dbReference>
<accession>Q974Y0</accession>
<accession>F9VN25</accession>
<keyword id="KW-0173">Coenzyme A biosynthesis</keyword>
<keyword id="KW-0963">Cytoplasm</keyword>
<keyword id="KW-0460">Magnesium</keyword>
<keyword id="KW-0479">Metal-binding</keyword>
<keyword id="KW-1185">Reference proteome</keyword>
<keyword id="KW-0808">Transferase</keyword>
<feature type="chain" id="PRO_0000184924" description="3-methyl-2-oxobutanoate hydroxymethyltransferase">
    <location>
        <begin position="1"/>
        <end position="267"/>
    </location>
</feature>
<feature type="active site" description="Proton acceptor" evidence="1">
    <location>
        <position position="182"/>
    </location>
</feature>
<feature type="binding site" evidence="1">
    <location>
        <begin position="45"/>
        <end position="46"/>
    </location>
    <ligand>
        <name>3-methyl-2-oxobutanoate</name>
        <dbReference type="ChEBI" id="CHEBI:11851"/>
    </ligand>
</feature>
<feature type="binding site" evidence="1">
    <location>
        <position position="45"/>
    </location>
    <ligand>
        <name>Mg(2+)</name>
        <dbReference type="ChEBI" id="CHEBI:18420"/>
    </ligand>
</feature>
<feature type="binding site" evidence="1">
    <location>
        <position position="84"/>
    </location>
    <ligand>
        <name>3-methyl-2-oxobutanoate</name>
        <dbReference type="ChEBI" id="CHEBI:11851"/>
    </ligand>
</feature>
<feature type="binding site" evidence="1">
    <location>
        <position position="84"/>
    </location>
    <ligand>
        <name>Mg(2+)</name>
        <dbReference type="ChEBI" id="CHEBI:18420"/>
    </ligand>
</feature>
<feature type="binding site" evidence="1">
    <location>
        <position position="113"/>
    </location>
    <ligand>
        <name>3-methyl-2-oxobutanoate</name>
        <dbReference type="ChEBI" id="CHEBI:11851"/>
    </ligand>
</feature>
<feature type="binding site" evidence="1">
    <location>
        <position position="115"/>
    </location>
    <ligand>
        <name>Mg(2+)</name>
        <dbReference type="ChEBI" id="CHEBI:18420"/>
    </ligand>
</feature>
<protein>
    <recommendedName>
        <fullName evidence="1">3-methyl-2-oxobutanoate hydroxymethyltransferase</fullName>
        <ecNumber evidence="1">2.1.2.11</ecNumber>
    </recommendedName>
    <alternativeName>
        <fullName evidence="1">Ketopantoate hydroxymethyltransferase</fullName>
        <shortName evidence="1">KPHMT</shortName>
    </alternativeName>
</protein>
<reference key="1">
    <citation type="journal article" date="2001" name="DNA Res.">
        <title>Complete genome sequence of an aerobic thermoacidophilic Crenarchaeon, Sulfolobus tokodaii strain7.</title>
        <authorList>
            <person name="Kawarabayasi Y."/>
            <person name="Hino Y."/>
            <person name="Horikawa H."/>
            <person name="Jin-no K."/>
            <person name="Takahashi M."/>
            <person name="Sekine M."/>
            <person name="Baba S."/>
            <person name="Ankai A."/>
            <person name="Kosugi H."/>
            <person name="Hosoyama A."/>
            <person name="Fukui S."/>
            <person name="Nagai Y."/>
            <person name="Nishijima K."/>
            <person name="Otsuka R."/>
            <person name="Nakazawa H."/>
            <person name="Takamiya M."/>
            <person name="Kato Y."/>
            <person name="Yoshizawa T."/>
            <person name="Tanaka T."/>
            <person name="Kudoh Y."/>
            <person name="Yamazaki J."/>
            <person name="Kushida N."/>
            <person name="Oguchi A."/>
            <person name="Aoki K."/>
            <person name="Masuda S."/>
            <person name="Yanagii M."/>
            <person name="Nishimura M."/>
            <person name="Yamagishi A."/>
            <person name="Oshima T."/>
            <person name="Kikuchi H."/>
        </authorList>
    </citation>
    <scope>NUCLEOTIDE SEQUENCE [LARGE SCALE GENOMIC DNA]</scope>
    <source>
        <strain>DSM 16993 / JCM 10545 / NBRC 100140 / 7</strain>
    </source>
</reference>
<proteinExistence type="inferred from homology"/>
<sequence length="267" mass="29724">MEKVTIRDFLKKKEKKEKIIMLTAYDYPSAKIISQTNLDGILVGDSLGMVVLGKENTLKVTMRDMLIHLDAVVKAKPPQLIVADMPFLSYETSIKDAVKNAGLLARHGADAVKLEGGEEMRDVVRAIVRAGIPVMGHIGLTPQRFLRIGGYRILGKREKEEEQLLKDAKTLEEAGAFSIVIENTYSDVAKKITESISIPTICIGAGPYCDGQILVIHDLLGLSDFTPYFAKKYIDLRGLIRRAIEDYISEVKEGKFPGKEHYKSRDS</sequence>
<gene>
    <name evidence="1" type="primary">panB</name>
    <name type="ordered locus">STK_05330</name>
</gene>
<name>PANB_SULTO</name>